<proteinExistence type="evidence at transcript level"/>
<name>MFS11_XENTR</name>
<dbReference type="EMBL" id="CR942618">
    <property type="protein sequence ID" value="CAJ82804.1"/>
    <property type="molecule type" value="mRNA"/>
</dbReference>
<dbReference type="EMBL" id="BC075448">
    <property type="protein sequence ID" value="AAH75448.1"/>
    <property type="molecule type" value="mRNA"/>
</dbReference>
<dbReference type="RefSeq" id="NP_001004954.1">
    <property type="nucleotide sequence ID" value="NM_001004954.1"/>
</dbReference>
<dbReference type="RefSeq" id="XP_012827087.1">
    <property type="nucleotide sequence ID" value="XM_012971633.3"/>
</dbReference>
<dbReference type="RefSeq" id="XP_012827088.1">
    <property type="nucleotide sequence ID" value="XM_012971634.3"/>
</dbReference>
<dbReference type="RefSeq" id="XP_012827089.1">
    <property type="nucleotide sequence ID" value="XM_012971635.3"/>
</dbReference>
<dbReference type="SMR" id="Q6DIT7"/>
<dbReference type="FunCoup" id="Q6DIT7">
    <property type="interactions" value="56"/>
</dbReference>
<dbReference type="STRING" id="8364.ENSXETP00000022505"/>
<dbReference type="GlyCosmos" id="Q6DIT7">
    <property type="glycosylation" value="2 sites, No reported glycans"/>
</dbReference>
<dbReference type="PaxDb" id="8364-ENSXETP00000062362"/>
<dbReference type="DNASU" id="448366"/>
<dbReference type="GeneID" id="448366"/>
<dbReference type="KEGG" id="xtr:448366"/>
<dbReference type="AGR" id="Xenbase:XB-GENE-1003745"/>
<dbReference type="CTD" id="79157"/>
<dbReference type="Xenbase" id="XB-GENE-1003745">
    <property type="gene designation" value="mfsd11"/>
</dbReference>
<dbReference type="eggNOG" id="KOG3098">
    <property type="taxonomic scope" value="Eukaryota"/>
</dbReference>
<dbReference type="HOGENOM" id="CLU_025356_2_0_1"/>
<dbReference type="InParanoid" id="Q6DIT7"/>
<dbReference type="OMA" id="QFQDKTH"/>
<dbReference type="OrthoDB" id="196103at2759"/>
<dbReference type="PhylomeDB" id="Q6DIT7"/>
<dbReference type="Proteomes" id="UP000008143">
    <property type="component" value="Chromosome 10"/>
</dbReference>
<dbReference type="Bgee" id="ENSXETG00000019492">
    <property type="expression patterns" value="Expressed in 4-cell stage embryo and 13 other cell types or tissues"/>
</dbReference>
<dbReference type="GO" id="GO:0016020">
    <property type="term" value="C:membrane"/>
    <property type="evidence" value="ECO:0007669"/>
    <property type="project" value="UniProtKB-SubCell"/>
</dbReference>
<dbReference type="CDD" id="cd17407">
    <property type="entry name" value="MFS_MFSD11"/>
    <property type="match status" value="1"/>
</dbReference>
<dbReference type="Gene3D" id="1.20.1250.20">
    <property type="entry name" value="MFS general substrate transporter like domains"/>
    <property type="match status" value="2"/>
</dbReference>
<dbReference type="InterPro" id="IPR010291">
    <property type="entry name" value="Ion_channel_UNC-93"/>
</dbReference>
<dbReference type="InterPro" id="IPR036259">
    <property type="entry name" value="MFS_trans_sf"/>
</dbReference>
<dbReference type="InterPro" id="IPR051617">
    <property type="entry name" value="UNC-93-like_regulator"/>
</dbReference>
<dbReference type="PANTHER" id="PTHR23294">
    <property type="entry name" value="ET TRANSLATION PRODUCT-RELATED"/>
    <property type="match status" value="1"/>
</dbReference>
<dbReference type="PANTHER" id="PTHR23294:SF0">
    <property type="entry name" value="UNC93-LIKE PROTEIN MFSD11"/>
    <property type="match status" value="1"/>
</dbReference>
<dbReference type="Pfam" id="PF05978">
    <property type="entry name" value="UNC-93"/>
    <property type="match status" value="1"/>
</dbReference>
<dbReference type="SUPFAM" id="SSF103473">
    <property type="entry name" value="MFS general substrate transporter"/>
    <property type="match status" value="1"/>
</dbReference>
<keyword id="KW-0325">Glycoprotein</keyword>
<keyword id="KW-0472">Membrane</keyword>
<keyword id="KW-1185">Reference proteome</keyword>
<keyword id="KW-0812">Transmembrane</keyword>
<keyword id="KW-1133">Transmembrane helix</keyword>
<comment type="subcellular location">
    <subcellularLocation>
        <location evidence="2">Membrane</location>
        <topology evidence="2">Multi-pass membrane protein</topology>
    </subcellularLocation>
</comment>
<comment type="similarity">
    <text evidence="2">Belongs to the unc-93 family.</text>
</comment>
<comment type="caution">
    <text evidence="2">Despite its name it is related to the unc-93 family and not to the major facilitator superfamily.</text>
</comment>
<gene>
    <name type="primary">mfsd11</name>
    <name type="ORF">TNeu052c09.1</name>
</gene>
<protein>
    <recommendedName>
        <fullName>UNC93-like protein MFSD11</fullName>
    </recommendedName>
    <alternativeName>
        <fullName>Major facilitator superfamily domain-containing protein 11</fullName>
    </alternativeName>
</protein>
<reference key="1">
    <citation type="submission" date="2006-10" db="EMBL/GenBank/DDBJ databases">
        <authorList>
            <consortium name="Sanger Xenopus tropicalis EST/cDNA project"/>
        </authorList>
    </citation>
    <scope>NUCLEOTIDE SEQUENCE [LARGE SCALE MRNA]</scope>
    <source>
        <tissue>Neurula</tissue>
    </source>
</reference>
<reference key="2">
    <citation type="submission" date="2004-06" db="EMBL/GenBank/DDBJ databases">
        <authorList>
            <consortium name="NIH - Xenopus Gene Collection (XGC) project"/>
        </authorList>
    </citation>
    <scope>NUCLEOTIDE SEQUENCE [LARGE SCALE MRNA]</scope>
</reference>
<sequence length="445" mass="48591">MSPESRKLLNIIILGIGFMFMFTAFQTSGNVAQTVISSLNSTSFHGSGYTSLAIIYSVFSASNLIAPSIVAVIGCQMSMFLSGLLYSAYIAMFIQPYTWSFYTLSVLIGIAAAVLWTAQGSCLTINSDDTTIGKHSGIFWALLQFSMLFGNLFIYLAWKGEINISDSDRRTVFIALTVISLVGSVLFFLIRTPESDDAQEDDISNSAADAEGTMSAQSCFAKAIDAFKRSLKLSITKEMLLLSILVAYTGLELTFYSGVYGTCIGSMKVFEADAKSLIGLSGIFVGLGEVLGGGLFGLLGKYNYFGRNPVVILGVVVHFLAFYMIYLYMPSDAPIASREGTYLRAFINPSKTIALACSFLLGLGDSCYNTQMLSILGSLYPDNSAPAFAVFKFVQSVSAAVAFFYSNYLLLHWQLLILVIFGFFGTISFFFVEWGLTRRSQYNSM</sequence>
<organism>
    <name type="scientific">Xenopus tropicalis</name>
    <name type="common">Western clawed frog</name>
    <name type="synonym">Silurana tropicalis</name>
    <dbReference type="NCBI Taxonomy" id="8364"/>
    <lineage>
        <taxon>Eukaryota</taxon>
        <taxon>Metazoa</taxon>
        <taxon>Chordata</taxon>
        <taxon>Craniata</taxon>
        <taxon>Vertebrata</taxon>
        <taxon>Euteleostomi</taxon>
        <taxon>Amphibia</taxon>
        <taxon>Batrachia</taxon>
        <taxon>Anura</taxon>
        <taxon>Pipoidea</taxon>
        <taxon>Pipidae</taxon>
        <taxon>Xenopodinae</taxon>
        <taxon>Xenopus</taxon>
        <taxon>Silurana</taxon>
    </lineage>
</organism>
<feature type="chain" id="PRO_0000305024" description="UNC93-like protein MFSD11">
    <location>
        <begin position="1"/>
        <end position="445"/>
    </location>
</feature>
<feature type="transmembrane region" description="Helical" evidence="1">
    <location>
        <begin position="8"/>
        <end position="28"/>
    </location>
</feature>
<feature type="transmembrane region" description="Helical" evidence="1">
    <location>
        <begin position="53"/>
        <end position="73"/>
    </location>
</feature>
<feature type="transmembrane region" description="Helical" evidence="1">
    <location>
        <begin position="74"/>
        <end position="94"/>
    </location>
</feature>
<feature type="transmembrane region" description="Helical" evidence="1">
    <location>
        <begin position="98"/>
        <end position="118"/>
    </location>
</feature>
<feature type="transmembrane region" description="Helical" evidence="1">
    <location>
        <begin position="138"/>
        <end position="158"/>
    </location>
</feature>
<feature type="transmembrane region" description="Helical" evidence="1">
    <location>
        <begin position="170"/>
        <end position="190"/>
    </location>
</feature>
<feature type="transmembrane region" description="Helical" evidence="1">
    <location>
        <begin position="239"/>
        <end position="259"/>
    </location>
</feature>
<feature type="transmembrane region" description="Helical" evidence="1">
    <location>
        <begin position="277"/>
        <end position="297"/>
    </location>
</feature>
<feature type="transmembrane region" description="Helical" evidence="1">
    <location>
        <begin position="309"/>
        <end position="329"/>
    </location>
</feature>
<feature type="transmembrane region" description="Helical" evidence="1">
    <location>
        <begin position="345"/>
        <end position="365"/>
    </location>
</feature>
<feature type="transmembrane region" description="Helical" evidence="1">
    <location>
        <begin position="385"/>
        <end position="405"/>
    </location>
</feature>
<feature type="transmembrane region" description="Helical" evidence="1">
    <location>
        <begin position="415"/>
        <end position="435"/>
    </location>
</feature>
<feature type="glycosylation site" description="N-linked (GlcNAc...) asparagine" evidence="1">
    <location>
        <position position="40"/>
    </location>
</feature>
<feature type="glycosylation site" description="N-linked (GlcNAc...) asparagine" evidence="1">
    <location>
        <position position="163"/>
    </location>
</feature>
<evidence type="ECO:0000255" key="1"/>
<evidence type="ECO:0000305" key="2"/>
<accession>Q6DIT7</accession>